<protein>
    <recommendedName>
        <fullName evidence="1">Glycine--tRNA ligase beta subunit</fullName>
        <ecNumber evidence="1">6.1.1.14</ecNumber>
    </recommendedName>
    <alternativeName>
        <fullName evidence="1">Glycyl-tRNA synthetase beta subunit</fullName>
        <shortName evidence="1">GlyRS</shortName>
    </alternativeName>
</protein>
<gene>
    <name evidence="1" type="primary">glyS</name>
    <name type="ordered locus">Dshi_2402</name>
</gene>
<comment type="catalytic activity">
    <reaction evidence="1">
        <text>tRNA(Gly) + glycine + ATP = glycyl-tRNA(Gly) + AMP + diphosphate</text>
        <dbReference type="Rhea" id="RHEA:16013"/>
        <dbReference type="Rhea" id="RHEA-COMP:9664"/>
        <dbReference type="Rhea" id="RHEA-COMP:9683"/>
        <dbReference type="ChEBI" id="CHEBI:30616"/>
        <dbReference type="ChEBI" id="CHEBI:33019"/>
        <dbReference type="ChEBI" id="CHEBI:57305"/>
        <dbReference type="ChEBI" id="CHEBI:78442"/>
        <dbReference type="ChEBI" id="CHEBI:78522"/>
        <dbReference type="ChEBI" id="CHEBI:456215"/>
        <dbReference type="EC" id="6.1.1.14"/>
    </reaction>
</comment>
<comment type="subunit">
    <text evidence="1">Tetramer of two alpha and two beta subunits.</text>
</comment>
<comment type="subcellular location">
    <subcellularLocation>
        <location evidence="1">Cytoplasm</location>
    </subcellularLocation>
</comment>
<comment type="similarity">
    <text evidence="1">Belongs to the class-II aminoacyl-tRNA synthetase family.</text>
</comment>
<feature type="chain" id="PRO_1000101276" description="Glycine--tRNA ligase beta subunit">
    <location>
        <begin position="1"/>
        <end position="720"/>
    </location>
</feature>
<dbReference type="EC" id="6.1.1.14" evidence="1"/>
<dbReference type="EMBL" id="CP000830">
    <property type="protein sequence ID" value="ABV94138.1"/>
    <property type="molecule type" value="Genomic_DNA"/>
</dbReference>
<dbReference type="RefSeq" id="WP_012179069.1">
    <property type="nucleotide sequence ID" value="NC_009952.1"/>
</dbReference>
<dbReference type="SMR" id="A8LS45"/>
<dbReference type="STRING" id="398580.Dshi_2402"/>
<dbReference type="KEGG" id="dsh:Dshi_2402"/>
<dbReference type="eggNOG" id="COG0751">
    <property type="taxonomic scope" value="Bacteria"/>
</dbReference>
<dbReference type="HOGENOM" id="CLU_007220_2_1_5"/>
<dbReference type="OrthoDB" id="9775440at2"/>
<dbReference type="Proteomes" id="UP000006833">
    <property type="component" value="Chromosome"/>
</dbReference>
<dbReference type="GO" id="GO:0005829">
    <property type="term" value="C:cytosol"/>
    <property type="evidence" value="ECO:0007669"/>
    <property type="project" value="TreeGrafter"/>
</dbReference>
<dbReference type="GO" id="GO:0004814">
    <property type="term" value="F:arginine-tRNA ligase activity"/>
    <property type="evidence" value="ECO:0007669"/>
    <property type="project" value="InterPro"/>
</dbReference>
<dbReference type="GO" id="GO:0005524">
    <property type="term" value="F:ATP binding"/>
    <property type="evidence" value="ECO:0007669"/>
    <property type="project" value="UniProtKB-UniRule"/>
</dbReference>
<dbReference type="GO" id="GO:0004820">
    <property type="term" value="F:glycine-tRNA ligase activity"/>
    <property type="evidence" value="ECO:0007669"/>
    <property type="project" value="UniProtKB-UniRule"/>
</dbReference>
<dbReference type="GO" id="GO:0006420">
    <property type="term" value="P:arginyl-tRNA aminoacylation"/>
    <property type="evidence" value="ECO:0007669"/>
    <property type="project" value="InterPro"/>
</dbReference>
<dbReference type="GO" id="GO:0006426">
    <property type="term" value="P:glycyl-tRNA aminoacylation"/>
    <property type="evidence" value="ECO:0007669"/>
    <property type="project" value="UniProtKB-UniRule"/>
</dbReference>
<dbReference type="HAMAP" id="MF_00255">
    <property type="entry name" value="Gly_tRNA_synth_beta"/>
    <property type="match status" value="1"/>
</dbReference>
<dbReference type="InterPro" id="IPR008909">
    <property type="entry name" value="DALR_anticod-bd"/>
</dbReference>
<dbReference type="InterPro" id="IPR015944">
    <property type="entry name" value="Gly-tRNA-synth_bsu"/>
</dbReference>
<dbReference type="InterPro" id="IPR006194">
    <property type="entry name" value="Gly-tRNA-synth_heterodimer"/>
</dbReference>
<dbReference type="NCBIfam" id="TIGR00211">
    <property type="entry name" value="glyS"/>
    <property type="match status" value="1"/>
</dbReference>
<dbReference type="PANTHER" id="PTHR30075:SF2">
    <property type="entry name" value="GLYCINE--TRNA LIGASE, CHLOROPLASTIC_MITOCHONDRIAL 2"/>
    <property type="match status" value="1"/>
</dbReference>
<dbReference type="PANTHER" id="PTHR30075">
    <property type="entry name" value="GLYCYL-TRNA SYNTHETASE"/>
    <property type="match status" value="1"/>
</dbReference>
<dbReference type="Pfam" id="PF05746">
    <property type="entry name" value="DALR_1"/>
    <property type="match status" value="1"/>
</dbReference>
<dbReference type="Pfam" id="PF02092">
    <property type="entry name" value="tRNA_synt_2f"/>
    <property type="match status" value="1"/>
</dbReference>
<dbReference type="PRINTS" id="PR01045">
    <property type="entry name" value="TRNASYNTHGB"/>
</dbReference>
<dbReference type="SMART" id="SM00836">
    <property type="entry name" value="DALR_1"/>
    <property type="match status" value="1"/>
</dbReference>
<dbReference type="SUPFAM" id="SSF109604">
    <property type="entry name" value="HD-domain/PDEase-like"/>
    <property type="match status" value="1"/>
</dbReference>
<dbReference type="PROSITE" id="PS50861">
    <property type="entry name" value="AA_TRNA_LIGASE_II_GLYAB"/>
    <property type="match status" value="1"/>
</dbReference>
<evidence type="ECO:0000255" key="1">
    <source>
        <dbReference type="HAMAP-Rule" id="MF_00255"/>
    </source>
</evidence>
<name>SYGB_DINSH</name>
<keyword id="KW-0030">Aminoacyl-tRNA synthetase</keyword>
<keyword id="KW-0067">ATP-binding</keyword>
<keyword id="KW-0963">Cytoplasm</keyword>
<keyword id="KW-0436">Ligase</keyword>
<keyword id="KW-0547">Nucleotide-binding</keyword>
<keyword id="KW-0648">Protein biosynthesis</keyword>
<keyword id="KW-1185">Reference proteome</keyword>
<proteinExistence type="inferred from homology"/>
<sequence>MPELLIELFSEEIPARMQARAAQDLQKLVTNGLVEAGITYAGARAYATPRRLTLVVSDMLAASAPVREERKGPKADAPEKAIEGFLRSTGLGREQLETRETPKGDVLFAVIEKPGRPAAEIVAEVLETTIRNFPWPKSMRWGSSSLRWVRPLHRILCLIRDEEGAEIVPLTVDGITAGDVTEGHRFLAPGEIKVHGFEDYETKLRRAKVILDAEERAEHIWADATNQAFAQGLEVVEDRRLLSEVAGLVEFPVPLMGEIDADFLDLPPEVLQTSMKEHQKFFSVRDLKSGKIVRFVTVANTETTDHGATILAGNRKVLSARLADAKFFWENDLRIARAGMQPWREALENVTFHNKLGSQAARIARIADLAATLAPQVGADPDAARTAAELAKADLSSEMVFEFPELQGLMGRYYAEAAGHPAEIAAVAQDHYQPLGPSDAVPTAPLSIAVALADKLDTLTGFWAIDEKPTGSKDPFALRRAALGVIRIVLENGLRLPLINSVKHHNSENTSRPLFSALVAHAKTDQERADGSKSMSDWKALVARSQDDLLSFFHDRLKVFLRDEGIRHDIIDACLAMEGNDDLLLLVNRARALSETLKTEDGENLLQGFKRANNILTQAEEADGVEYSYGADPKFAETDEERALFAALDTAEAVIDPALEAEDFAAATAAMASLRAPLDAFFEAVQVNAENQILRRNRLNLLSRIRATCLKLADLTRIEG</sequence>
<reference key="1">
    <citation type="journal article" date="2010" name="ISME J.">
        <title>The complete genome sequence of the algal symbiont Dinoroseobacter shibae: a hitchhiker's guide to life in the sea.</title>
        <authorList>
            <person name="Wagner-Dobler I."/>
            <person name="Ballhausen B."/>
            <person name="Berger M."/>
            <person name="Brinkhoff T."/>
            <person name="Buchholz I."/>
            <person name="Bunk B."/>
            <person name="Cypionka H."/>
            <person name="Daniel R."/>
            <person name="Drepper T."/>
            <person name="Gerdts G."/>
            <person name="Hahnke S."/>
            <person name="Han C."/>
            <person name="Jahn D."/>
            <person name="Kalhoefer D."/>
            <person name="Kiss H."/>
            <person name="Klenk H.P."/>
            <person name="Kyrpides N."/>
            <person name="Liebl W."/>
            <person name="Liesegang H."/>
            <person name="Meincke L."/>
            <person name="Pati A."/>
            <person name="Petersen J."/>
            <person name="Piekarski T."/>
            <person name="Pommerenke C."/>
            <person name="Pradella S."/>
            <person name="Pukall R."/>
            <person name="Rabus R."/>
            <person name="Stackebrandt E."/>
            <person name="Thole S."/>
            <person name="Thompson L."/>
            <person name="Tielen P."/>
            <person name="Tomasch J."/>
            <person name="von Jan M."/>
            <person name="Wanphrut N."/>
            <person name="Wichels A."/>
            <person name="Zech H."/>
            <person name="Simon M."/>
        </authorList>
    </citation>
    <scope>NUCLEOTIDE SEQUENCE [LARGE SCALE GENOMIC DNA]</scope>
    <source>
        <strain>DSM 16493 / NCIMB 14021 / DFL 12</strain>
    </source>
</reference>
<organism>
    <name type="scientific">Dinoroseobacter shibae (strain DSM 16493 / NCIMB 14021 / DFL 12)</name>
    <dbReference type="NCBI Taxonomy" id="398580"/>
    <lineage>
        <taxon>Bacteria</taxon>
        <taxon>Pseudomonadati</taxon>
        <taxon>Pseudomonadota</taxon>
        <taxon>Alphaproteobacteria</taxon>
        <taxon>Rhodobacterales</taxon>
        <taxon>Roseobacteraceae</taxon>
        <taxon>Dinoroseobacter</taxon>
    </lineage>
</organism>
<accession>A8LS45</accession>